<gene>
    <name type="primary">PEX6</name>
    <name type="ordered locus">CAGL0D02574g</name>
</gene>
<proteinExistence type="inferred from homology"/>
<name>PEX6_CANGA</name>
<sequence length="1017" mass="114807">MMITADLIWDENLDNDCEVSKDIWEDDTFIDKSYLKVVLPSYDGVDTPIVYHFKLNDDLKINSIKIPTNSIGNLGKFGRLNTCSLEAVSGEPPVLKEIIIKIDERLYDKLALLPKANEKKQYFQIKYNLVNKQSVIHEGNIWGHVCEVVETKPFSQGVIDFSVTDIVLIRSKILSVENKHDRSLVNLQAFHDLSRIPLKCLHYPVERSLLLPEPPFDDDDSIYVFFPFDLLSKLKISSGSFVRLSNSKNSVLVRAFLLQSPNHYAVDGIYTTPFVLAQFDELPLVEVEPVYNNELAFPTASEVVISKVGNVLHTQKRYQELILQKLRYYFLTARRILSNGSLIPITIDSSFDEIILEDIDLDVNTIKSDDDCIVWFVVSNRKFENISNYDPKAEFFVDPKHTKLITSAMENRSLSSNTFNSALKYYGLPGVFHYRPDIFPVVNDIKNVINTHAEANKKVPNLPMILNLSSNVPKVGKASILRSIAIDLSYQFVDIDTLSVVFSSGSSDIATTFLGYLKGKLENLLPFTGNTIILIKHIDHILKKVDQNQDIQQSRQVKALEGDLISFIKSYSRIYPGVVFAFTSASIDNLPEGFRSEIKFDYVVHPPNEKQRRSIIDELLSTSDLFQKYGNRKLRIQCSNEIEISTLSLHSAGLSPYDIQYIISLAVADSLRKCNNYLLWRQNKIKVDMISIQNALEKVRSDYSASIGAPSIPNVTWDDVGGLSSVKDAIMETIDLPLKHPELFGSGLKKRSGILFYGPPGTGKTLLAKAIATNFSLNFFSVKGPELLNMYIGESEANVRRVFQKARDAKPCVIFFDEVDSVAPKRGNQGDSGGVMDRIVSQLLAELDGMSSDGDGVFIIGATNRPDLLDEALLRPGRFDKLIYLGIADTREKQANIMRALTRKFKVSSDINFDELVSDFPFSYTGADFYALCSDAMLKAMTRISKEIDEKVDKYNQDNGTSISIRYWFDHVCSDEDTDVIVKKEDFLNANKELIPSVSQQELEHYKQIRANFEDSK</sequence>
<accession>Q6FW67</accession>
<feature type="chain" id="PRO_0000084611" description="Peroxisomal ATPase PEX6">
    <location>
        <begin position="1"/>
        <end position="1017"/>
    </location>
</feature>
<feature type="binding site" evidence="2">
    <location>
        <begin position="758"/>
        <end position="765"/>
    </location>
    <ligand>
        <name>ATP</name>
        <dbReference type="ChEBI" id="CHEBI:30616"/>
    </ligand>
</feature>
<protein>
    <recommendedName>
        <fullName evidence="3">Peroxisomal ATPase PEX6</fullName>
        <ecNumber evidence="1">3.6.4.-</ecNumber>
    </recommendedName>
    <alternativeName>
        <fullName>Peroxin-6</fullName>
    </alternativeName>
    <alternativeName>
        <fullName>Peroxisomal biogenesis factor 6</fullName>
    </alternativeName>
</protein>
<dbReference type="EC" id="3.6.4.-" evidence="1"/>
<dbReference type="EMBL" id="CR380950">
    <property type="protein sequence ID" value="CAG58438.1"/>
    <property type="molecule type" value="Genomic_DNA"/>
</dbReference>
<dbReference type="RefSeq" id="XP_445527.1">
    <property type="nucleotide sequence ID" value="XM_445527.1"/>
</dbReference>
<dbReference type="SMR" id="Q6FW67"/>
<dbReference type="FunCoup" id="Q6FW67">
    <property type="interactions" value="306"/>
</dbReference>
<dbReference type="STRING" id="284593.Q6FW67"/>
<dbReference type="EnsemblFungi" id="CAGL0D02574g-T">
    <property type="protein sequence ID" value="CAGL0D02574g-T-p1"/>
    <property type="gene ID" value="CAGL0D02574g"/>
</dbReference>
<dbReference type="GeneID" id="2887074"/>
<dbReference type="KEGG" id="cgr:2887074"/>
<dbReference type="CGD" id="CAL0128353">
    <property type="gene designation" value="PEX6"/>
</dbReference>
<dbReference type="VEuPathDB" id="FungiDB:CAGL0D02574g"/>
<dbReference type="eggNOG" id="KOG0736">
    <property type="taxonomic scope" value="Eukaryota"/>
</dbReference>
<dbReference type="HOGENOM" id="CLU_000688_0_4_1"/>
<dbReference type="InParanoid" id="Q6FW67"/>
<dbReference type="OMA" id="DSMLNAM"/>
<dbReference type="Proteomes" id="UP000002428">
    <property type="component" value="Chromosome D"/>
</dbReference>
<dbReference type="GO" id="GO:1904949">
    <property type="term" value="C:ATPase complex"/>
    <property type="evidence" value="ECO:0007669"/>
    <property type="project" value="EnsemblFungi"/>
</dbReference>
<dbReference type="GO" id="GO:0005829">
    <property type="term" value="C:cytosol"/>
    <property type="evidence" value="ECO:0000266"/>
    <property type="project" value="CGD"/>
</dbReference>
<dbReference type="GO" id="GO:0005778">
    <property type="term" value="C:peroxisomal membrane"/>
    <property type="evidence" value="ECO:0007669"/>
    <property type="project" value="UniProtKB-SubCell"/>
</dbReference>
<dbReference type="GO" id="GO:0005777">
    <property type="term" value="C:peroxisome"/>
    <property type="evidence" value="ECO:0000266"/>
    <property type="project" value="CGD"/>
</dbReference>
<dbReference type="GO" id="GO:1990351">
    <property type="term" value="C:transporter complex"/>
    <property type="evidence" value="ECO:0007669"/>
    <property type="project" value="EnsemblFungi"/>
</dbReference>
<dbReference type="GO" id="GO:0005524">
    <property type="term" value="F:ATP binding"/>
    <property type="evidence" value="ECO:0007669"/>
    <property type="project" value="UniProtKB-KW"/>
</dbReference>
<dbReference type="GO" id="GO:0016887">
    <property type="term" value="F:ATP hydrolysis activity"/>
    <property type="evidence" value="ECO:0000266"/>
    <property type="project" value="CGD"/>
</dbReference>
<dbReference type="GO" id="GO:0046982">
    <property type="term" value="F:protein heterodimerization activity"/>
    <property type="evidence" value="ECO:0000266"/>
    <property type="project" value="CGD"/>
</dbReference>
<dbReference type="GO" id="GO:0140318">
    <property type="term" value="F:protein transporter activity"/>
    <property type="evidence" value="ECO:0007669"/>
    <property type="project" value="EnsemblFungi"/>
</dbReference>
<dbReference type="GO" id="GO:0006631">
    <property type="term" value="P:fatty acid metabolic process"/>
    <property type="evidence" value="ECO:0000266"/>
    <property type="project" value="CGD"/>
</dbReference>
<dbReference type="GO" id="GO:0016562">
    <property type="term" value="P:protein import into peroxisome matrix, receptor recycling"/>
    <property type="evidence" value="ECO:0000266"/>
    <property type="project" value="CGD"/>
</dbReference>
<dbReference type="GO" id="GO:0006625">
    <property type="term" value="P:protein targeting to peroxisome"/>
    <property type="evidence" value="ECO:0000266"/>
    <property type="project" value="CGD"/>
</dbReference>
<dbReference type="GO" id="GO:0043335">
    <property type="term" value="P:protein unfolding"/>
    <property type="evidence" value="ECO:0007669"/>
    <property type="project" value="EnsemblFungi"/>
</dbReference>
<dbReference type="CDD" id="cd19527">
    <property type="entry name" value="RecA-like_PEX6_r2"/>
    <property type="match status" value="1"/>
</dbReference>
<dbReference type="FunFam" id="3.40.50.300:FF:000109">
    <property type="entry name" value="Peroxisomal biogenesis factor 6"/>
    <property type="match status" value="1"/>
</dbReference>
<dbReference type="FunFam" id="1.10.8.60:FF:000039">
    <property type="entry name" value="peroxisome biogenesis factor 6"/>
    <property type="match status" value="1"/>
</dbReference>
<dbReference type="Gene3D" id="1.10.8.60">
    <property type="match status" value="1"/>
</dbReference>
<dbReference type="Gene3D" id="3.40.50.300">
    <property type="entry name" value="P-loop containing nucleotide triphosphate hydrolases"/>
    <property type="match status" value="2"/>
</dbReference>
<dbReference type="InterPro" id="IPR003593">
    <property type="entry name" value="AAA+_ATPase"/>
</dbReference>
<dbReference type="InterPro" id="IPR050168">
    <property type="entry name" value="AAA_ATPase_domain"/>
</dbReference>
<dbReference type="InterPro" id="IPR003959">
    <property type="entry name" value="ATPase_AAA_core"/>
</dbReference>
<dbReference type="InterPro" id="IPR003960">
    <property type="entry name" value="ATPase_AAA_CS"/>
</dbReference>
<dbReference type="InterPro" id="IPR027417">
    <property type="entry name" value="P-loop_NTPase"/>
</dbReference>
<dbReference type="InterPro" id="IPR056995">
    <property type="entry name" value="PEX6_4th_dom"/>
</dbReference>
<dbReference type="InterPro" id="IPR047533">
    <property type="entry name" value="RecA-like_PEX6_r2"/>
</dbReference>
<dbReference type="PANTHER" id="PTHR23077">
    <property type="entry name" value="AAA-FAMILY ATPASE"/>
    <property type="match status" value="1"/>
</dbReference>
<dbReference type="PANTHER" id="PTHR23077:SF9">
    <property type="entry name" value="PEROXISOMAL ATPASE PEX6"/>
    <property type="match status" value="1"/>
</dbReference>
<dbReference type="Pfam" id="PF00004">
    <property type="entry name" value="AAA"/>
    <property type="match status" value="2"/>
</dbReference>
<dbReference type="Pfam" id="PF23111">
    <property type="entry name" value="N1_PEX6"/>
    <property type="match status" value="1"/>
</dbReference>
<dbReference type="Pfam" id="PF23315">
    <property type="entry name" value="PEX6_4th"/>
    <property type="match status" value="1"/>
</dbReference>
<dbReference type="SMART" id="SM00382">
    <property type="entry name" value="AAA"/>
    <property type="match status" value="1"/>
</dbReference>
<dbReference type="SUPFAM" id="SSF52540">
    <property type="entry name" value="P-loop containing nucleoside triphosphate hydrolases"/>
    <property type="match status" value="2"/>
</dbReference>
<dbReference type="PROSITE" id="PS00674">
    <property type="entry name" value="AAA"/>
    <property type="match status" value="1"/>
</dbReference>
<organism>
    <name type="scientific">Candida glabrata (strain ATCC 2001 / BCRC 20586 / JCM 3761 / NBRC 0622 / NRRL Y-65 / CBS 138)</name>
    <name type="common">Yeast</name>
    <name type="synonym">Nakaseomyces glabratus</name>
    <dbReference type="NCBI Taxonomy" id="284593"/>
    <lineage>
        <taxon>Eukaryota</taxon>
        <taxon>Fungi</taxon>
        <taxon>Dikarya</taxon>
        <taxon>Ascomycota</taxon>
        <taxon>Saccharomycotina</taxon>
        <taxon>Saccharomycetes</taxon>
        <taxon>Saccharomycetales</taxon>
        <taxon>Saccharomycetaceae</taxon>
        <taxon>Nakaseomyces</taxon>
    </lineage>
</organism>
<evidence type="ECO:0000250" key="1">
    <source>
        <dbReference type="UniProtKB" id="P33760"/>
    </source>
</evidence>
<evidence type="ECO:0000255" key="2"/>
<evidence type="ECO:0000305" key="3"/>
<reference key="1">
    <citation type="journal article" date="2004" name="Nature">
        <title>Genome evolution in yeasts.</title>
        <authorList>
            <person name="Dujon B."/>
            <person name="Sherman D."/>
            <person name="Fischer G."/>
            <person name="Durrens P."/>
            <person name="Casaregola S."/>
            <person name="Lafontaine I."/>
            <person name="de Montigny J."/>
            <person name="Marck C."/>
            <person name="Neuveglise C."/>
            <person name="Talla E."/>
            <person name="Goffard N."/>
            <person name="Frangeul L."/>
            <person name="Aigle M."/>
            <person name="Anthouard V."/>
            <person name="Babour A."/>
            <person name="Barbe V."/>
            <person name="Barnay S."/>
            <person name="Blanchin S."/>
            <person name="Beckerich J.-M."/>
            <person name="Beyne E."/>
            <person name="Bleykasten C."/>
            <person name="Boisrame A."/>
            <person name="Boyer J."/>
            <person name="Cattolico L."/>
            <person name="Confanioleri F."/>
            <person name="de Daruvar A."/>
            <person name="Despons L."/>
            <person name="Fabre E."/>
            <person name="Fairhead C."/>
            <person name="Ferry-Dumazet H."/>
            <person name="Groppi A."/>
            <person name="Hantraye F."/>
            <person name="Hennequin C."/>
            <person name="Jauniaux N."/>
            <person name="Joyet P."/>
            <person name="Kachouri R."/>
            <person name="Kerrest A."/>
            <person name="Koszul R."/>
            <person name="Lemaire M."/>
            <person name="Lesur I."/>
            <person name="Ma L."/>
            <person name="Muller H."/>
            <person name="Nicaud J.-M."/>
            <person name="Nikolski M."/>
            <person name="Oztas S."/>
            <person name="Ozier-Kalogeropoulos O."/>
            <person name="Pellenz S."/>
            <person name="Potier S."/>
            <person name="Richard G.-F."/>
            <person name="Straub M.-L."/>
            <person name="Suleau A."/>
            <person name="Swennen D."/>
            <person name="Tekaia F."/>
            <person name="Wesolowski-Louvel M."/>
            <person name="Westhof E."/>
            <person name="Wirth B."/>
            <person name="Zeniou-Meyer M."/>
            <person name="Zivanovic Y."/>
            <person name="Bolotin-Fukuhara M."/>
            <person name="Thierry A."/>
            <person name="Bouchier C."/>
            <person name="Caudron B."/>
            <person name="Scarpelli C."/>
            <person name="Gaillardin C."/>
            <person name="Weissenbach J."/>
            <person name="Wincker P."/>
            <person name="Souciet J.-L."/>
        </authorList>
    </citation>
    <scope>NUCLEOTIDE SEQUENCE [LARGE SCALE GENOMIC DNA]</scope>
    <source>
        <strain>ATCC 2001 / BCRC 20586 / JCM 3761 / NBRC 0622 / NRRL Y-65 / CBS 138</strain>
    </source>
</reference>
<comment type="function">
    <text evidence="1">Component of the PEX1-PEX6 AAA ATPase complex, a protein dislocase complex that mediates the ATP-dependent extraction of the PEX5 receptor from peroxisomal membranes, an essential step for PEX5 recycling. Specifically recognizes PEX5 monoubiquitinated at 'Cys-6', and pulls it out of the peroxisome lumen through the PEX2-PEX10-PEX12 retrotranslocation channel. Extraction by the PEX1-PEX6 AAA ATPase complex is accompanied by unfolding of the TPR repeats and release of bound cargo from PEX5.</text>
</comment>
<comment type="catalytic activity">
    <reaction evidence="1">
        <text>ATP + H2O = ADP + phosphate + H(+)</text>
        <dbReference type="Rhea" id="RHEA:13065"/>
        <dbReference type="ChEBI" id="CHEBI:15377"/>
        <dbReference type="ChEBI" id="CHEBI:15378"/>
        <dbReference type="ChEBI" id="CHEBI:30616"/>
        <dbReference type="ChEBI" id="CHEBI:43474"/>
        <dbReference type="ChEBI" id="CHEBI:456216"/>
    </reaction>
    <physiologicalReaction direction="left-to-right" evidence="1">
        <dbReference type="Rhea" id="RHEA:13066"/>
    </physiologicalReaction>
</comment>
<comment type="subunit">
    <text evidence="1">Interacts with PEX1; forming the PEX1-PEX6 AAA ATPase complex, which is composed of a heterohexamer formed by a trimer of PEX1-PEX6 dimers.</text>
</comment>
<comment type="subcellular location">
    <subcellularLocation>
        <location evidence="1">Cytoplasm</location>
        <location evidence="1">Cytosol</location>
    </subcellularLocation>
    <subcellularLocation>
        <location evidence="1">Peroxisome membrane</location>
        <topology evidence="1">Peripheral membrane protein</topology>
        <orientation evidence="1">Cytoplasmic side</orientation>
    </subcellularLocation>
</comment>
<comment type="similarity">
    <text evidence="3">Belongs to the AAA ATPase family.</text>
</comment>
<keyword id="KW-0067">ATP-binding</keyword>
<keyword id="KW-0963">Cytoplasm</keyword>
<keyword id="KW-0378">Hydrolase</keyword>
<keyword id="KW-0472">Membrane</keyword>
<keyword id="KW-0547">Nucleotide-binding</keyword>
<keyword id="KW-0576">Peroxisome</keyword>
<keyword id="KW-0962">Peroxisome biogenesis</keyword>
<keyword id="KW-1185">Reference proteome</keyword>